<organism>
    <name type="scientific">Streptococcus equi subsp. zooepidemicus (strain H70)</name>
    <dbReference type="NCBI Taxonomy" id="553483"/>
    <lineage>
        <taxon>Bacteria</taxon>
        <taxon>Bacillati</taxon>
        <taxon>Bacillota</taxon>
        <taxon>Bacilli</taxon>
        <taxon>Lactobacillales</taxon>
        <taxon>Streptococcaceae</taxon>
        <taxon>Streptococcus</taxon>
    </lineage>
</organism>
<sequence>MTFYNHKAIEPKWQAFWADNHTFKTGTDASKPKFYALDMFPYPSGAGLHVGHPEGYTATDILSRFKRAQGYNVLHPMGWDAFGLPAEQYAMDTGNDPAEFTAENIANFKRQINALGFSYDWDREINTTDPNYYKWTQWIFTKLYEKGLAYEAEVPVNWVEELGTAIANEEVLPDGTSERGGYPVVRKPMRQWMLKITAYAERLLADLEEVDWPESIKDMQRNWIGKSTGANVTFKVKDTDKDFTVFTTRPDTLFGATYAVLAPEHALVDSITTAEQAQAVAEYKRQASLKSDLARTDLAKEKTGVWTGAYAINPVNGKEMPIWIADYVLASYGTGAIMAVPAHDERDWAFAKQFNLEIIPVLEGGNVDEAAYTEDGIHINSDFLDGLDKACAIAKMVVWLEETGVGHEKVSYRLRDWLFSRQRYWGEPIPIIHWEDGTSTAVPEQDLPLVLPVTKDIRPSGTGESPLANLTDWLEVTREDGVKGRRETNTMPQWAGSSWYYLRYIDPHNDKQLADKDLLKQWLPVDIYIGGAEHAVLHLLYARFWHKVLYDLGVVPTKEPFQKLFNQGMILGTSYRDHRGALVATDKVDKRDGSFFHMETGEELEQAPAKMSKSLKNVVNPDDVVEQYGADTLRVYEMFMGPLDASIAWSEEGLEGARKFLDRVYRLITTKEIVAENSGALDKAYHETVKAVTEQIEGMKFNTAIAQLMIFVNAANKEDKLYVAYAKGFVQLLAPFAPHLGEELWQSLTASGQSISYVAWPTHDDSKLVENDVEIVVQIKGKVKAKLVVAKDLSREELEKVALAHDKIQAEIAGKEVIKVIAVPNKLVNIVVK</sequence>
<gene>
    <name evidence="1" type="primary">leuS</name>
    <name type="ordered locus">SZO_01440</name>
</gene>
<dbReference type="EC" id="6.1.1.4" evidence="1"/>
<dbReference type="EMBL" id="FM204884">
    <property type="protein sequence ID" value="CAW97815.1"/>
    <property type="molecule type" value="Genomic_DNA"/>
</dbReference>
<dbReference type="SMR" id="C0MET9"/>
<dbReference type="KEGG" id="seq:SZO_01440"/>
<dbReference type="PATRIC" id="fig|40041.11.peg.150"/>
<dbReference type="eggNOG" id="COG0495">
    <property type="taxonomic scope" value="Bacteria"/>
</dbReference>
<dbReference type="HOGENOM" id="CLU_004427_0_0_9"/>
<dbReference type="Proteomes" id="UP000001368">
    <property type="component" value="Chromosome"/>
</dbReference>
<dbReference type="GO" id="GO:0005829">
    <property type="term" value="C:cytosol"/>
    <property type="evidence" value="ECO:0007669"/>
    <property type="project" value="TreeGrafter"/>
</dbReference>
<dbReference type="GO" id="GO:0002161">
    <property type="term" value="F:aminoacyl-tRNA deacylase activity"/>
    <property type="evidence" value="ECO:0007669"/>
    <property type="project" value="InterPro"/>
</dbReference>
<dbReference type="GO" id="GO:0005524">
    <property type="term" value="F:ATP binding"/>
    <property type="evidence" value="ECO:0007669"/>
    <property type="project" value="UniProtKB-UniRule"/>
</dbReference>
<dbReference type="GO" id="GO:0004823">
    <property type="term" value="F:leucine-tRNA ligase activity"/>
    <property type="evidence" value="ECO:0007669"/>
    <property type="project" value="UniProtKB-UniRule"/>
</dbReference>
<dbReference type="GO" id="GO:0006429">
    <property type="term" value="P:leucyl-tRNA aminoacylation"/>
    <property type="evidence" value="ECO:0007669"/>
    <property type="project" value="UniProtKB-UniRule"/>
</dbReference>
<dbReference type="CDD" id="cd07958">
    <property type="entry name" value="Anticodon_Ia_Leu_BEm"/>
    <property type="match status" value="1"/>
</dbReference>
<dbReference type="CDD" id="cd00812">
    <property type="entry name" value="LeuRS_core"/>
    <property type="match status" value="1"/>
</dbReference>
<dbReference type="FunFam" id="1.10.730.10:FF:000012">
    <property type="entry name" value="Leucine--tRNA ligase"/>
    <property type="match status" value="1"/>
</dbReference>
<dbReference type="FunFam" id="3.40.50.620:FF:000056">
    <property type="entry name" value="Leucine--tRNA ligase"/>
    <property type="match status" value="1"/>
</dbReference>
<dbReference type="FunFam" id="3.40.50.620:FF:000077">
    <property type="entry name" value="Leucine--tRNA ligase"/>
    <property type="match status" value="1"/>
</dbReference>
<dbReference type="FunFam" id="1.10.730.10:FF:000011">
    <property type="entry name" value="Leucine--tRNA ligase chloroplastic/mitochondrial"/>
    <property type="match status" value="1"/>
</dbReference>
<dbReference type="Gene3D" id="3.40.50.620">
    <property type="entry name" value="HUPs"/>
    <property type="match status" value="2"/>
</dbReference>
<dbReference type="Gene3D" id="1.10.730.10">
    <property type="entry name" value="Isoleucyl-tRNA Synthetase, Domain 1"/>
    <property type="match status" value="1"/>
</dbReference>
<dbReference type="Gene3D" id="3.90.740.10">
    <property type="entry name" value="Valyl/Leucyl/Isoleucyl-tRNA synthetase, editing domain"/>
    <property type="match status" value="1"/>
</dbReference>
<dbReference type="HAMAP" id="MF_00049_B">
    <property type="entry name" value="Leu_tRNA_synth_B"/>
    <property type="match status" value="1"/>
</dbReference>
<dbReference type="InterPro" id="IPR001412">
    <property type="entry name" value="aa-tRNA-synth_I_CS"/>
</dbReference>
<dbReference type="InterPro" id="IPR002300">
    <property type="entry name" value="aa-tRNA-synth_Ia"/>
</dbReference>
<dbReference type="InterPro" id="IPR002302">
    <property type="entry name" value="Leu-tRNA-ligase"/>
</dbReference>
<dbReference type="InterPro" id="IPR025709">
    <property type="entry name" value="Leu_tRNA-synth_edit"/>
</dbReference>
<dbReference type="InterPro" id="IPR013155">
    <property type="entry name" value="M/V/L/I-tRNA-synth_anticd-bd"/>
</dbReference>
<dbReference type="InterPro" id="IPR015413">
    <property type="entry name" value="Methionyl/Leucyl_tRNA_Synth"/>
</dbReference>
<dbReference type="InterPro" id="IPR014729">
    <property type="entry name" value="Rossmann-like_a/b/a_fold"/>
</dbReference>
<dbReference type="InterPro" id="IPR009080">
    <property type="entry name" value="tRNAsynth_Ia_anticodon-bd"/>
</dbReference>
<dbReference type="InterPro" id="IPR009008">
    <property type="entry name" value="Val/Leu/Ile-tRNA-synth_edit"/>
</dbReference>
<dbReference type="NCBIfam" id="TIGR00396">
    <property type="entry name" value="leuS_bact"/>
    <property type="match status" value="1"/>
</dbReference>
<dbReference type="PANTHER" id="PTHR43740:SF2">
    <property type="entry name" value="LEUCINE--TRNA LIGASE, MITOCHONDRIAL"/>
    <property type="match status" value="1"/>
</dbReference>
<dbReference type="PANTHER" id="PTHR43740">
    <property type="entry name" value="LEUCYL-TRNA SYNTHETASE"/>
    <property type="match status" value="1"/>
</dbReference>
<dbReference type="Pfam" id="PF08264">
    <property type="entry name" value="Anticodon_1"/>
    <property type="match status" value="1"/>
</dbReference>
<dbReference type="Pfam" id="PF00133">
    <property type="entry name" value="tRNA-synt_1"/>
    <property type="match status" value="2"/>
</dbReference>
<dbReference type="Pfam" id="PF13603">
    <property type="entry name" value="tRNA-synt_1_2"/>
    <property type="match status" value="1"/>
</dbReference>
<dbReference type="Pfam" id="PF09334">
    <property type="entry name" value="tRNA-synt_1g"/>
    <property type="match status" value="1"/>
</dbReference>
<dbReference type="PRINTS" id="PR00985">
    <property type="entry name" value="TRNASYNTHLEU"/>
</dbReference>
<dbReference type="SUPFAM" id="SSF47323">
    <property type="entry name" value="Anticodon-binding domain of a subclass of class I aminoacyl-tRNA synthetases"/>
    <property type="match status" value="1"/>
</dbReference>
<dbReference type="SUPFAM" id="SSF52374">
    <property type="entry name" value="Nucleotidylyl transferase"/>
    <property type="match status" value="1"/>
</dbReference>
<dbReference type="SUPFAM" id="SSF50677">
    <property type="entry name" value="ValRS/IleRS/LeuRS editing domain"/>
    <property type="match status" value="1"/>
</dbReference>
<dbReference type="PROSITE" id="PS00178">
    <property type="entry name" value="AA_TRNA_LIGASE_I"/>
    <property type="match status" value="1"/>
</dbReference>
<evidence type="ECO:0000255" key="1">
    <source>
        <dbReference type="HAMAP-Rule" id="MF_00049"/>
    </source>
</evidence>
<keyword id="KW-0030">Aminoacyl-tRNA synthetase</keyword>
<keyword id="KW-0067">ATP-binding</keyword>
<keyword id="KW-0963">Cytoplasm</keyword>
<keyword id="KW-0436">Ligase</keyword>
<keyword id="KW-0547">Nucleotide-binding</keyword>
<keyword id="KW-0648">Protein biosynthesis</keyword>
<feature type="chain" id="PRO_1000202229" description="Leucine--tRNA ligase">
    <location>
        <begin position="1"/>
        <end position="833"/>
    </location>
</feature>
<feature type="short sequence motif" description="'HIGH' region">
    <location>
        <begin position="41"/>
        <end position="52"/>
    </location>
</feature>
<feature type="short sequence motif" description="'KMSKS' region">
    <location>
        <begin position="610"/>
        <end position="614"/>
    </location>
</feature>
<feature type="binding site" evidence="1">
    <location>
        <position position="613"/>
    </location>
    <ligand>
        <name>ATP</name>
        <dbReference type="ChEBI" id="CHEBI:30616"/>
    </ligand>
</feature>
<comment type="catalytic activity">
    <reaction evidence="1">
        <text>tRNA(Leu) + L-leucine + ATP = L-leucyl-tRNA(Leu) + AMP + diphosphate</text>
        <dbReference type="Rhea" id="RHEA:11688"/>
        <dbReference type="Rhea" id="RHEA-COMP:9613"/>
        <dbReference type="Rhea" id="RHEA-COMP:9622"/>
        <dbReference type="ChEBI" id="CHEBI:30616"/>
        <dbReference type="ChEBI" id="CHEBI:33019"/>
        <dbReference type="ChEBI" id="CHEBI:57427"/>
        <dbReference type="ChEBI" id="CHEBI:78442"/>
        <dbReference type="ChEBI" id="CHEBI:78494"/>
        <dbReference type="ChEBI" id="CHEBI:456215"/>
        <dbReference type="EC" id="6.1.1.4"/>
    </reaction>
</comment>
<comment type="subcellular location">
    <subcellularLocation>
        <location evidence="1">Cytoplasm</location>
    </subcellularLocation>
</comment>
<comment type="similarity">
    <text evidence="1">Belongs to the class-I aminoacyl-tRNA synthetase family.</text>
</comment>
<reference key="1">
    <citation type="journal article" date="2009" name="PLoS Pathog.">
        <title>Genomic evidence for the evolution of Streptococcus equi: host restriction, increased virulence, and genetic exchange with human pathogens.</title>
        <authorList>
            <person name="Holden M.T.G."/>
            <person name="Heather Z."/>
            <person name="Paillot R."/>
            <person name="Steward K.F."/>
            <person name="Webb K."/>
            <person name="Ainslie F."/>
            <person name="Jourdan T."/>
            <person name="Bason N.C."/>
            <person name="Holroyd N.E."/>
            <person name="Mungall K."/>
            <person name="Quail M.A."/>
            <person name="Sanders M."/>
            <person name="Simmonds M."/>
            <person name="Willey D."/>
            <person name="Brooks K."/>
            <person name="Aanensen D.M."/>
            <person name="Spratt B.G."/>
            <person name="Jolley K.A."/>
            <person name="Maiden M.C.J."/>
            <person name="Kehoe M."/>
            <person name="Chanter N."/>
            <person name="Bentley S.D."/>
            <person name="Robinson C."/>
            <person name="Maskell D.J."/>
            <person name="Parkhill J."/>
            <person name="Waller A.S."/>
        </authorList>
    </citation>
    <scope>NUCLEOTIDE SEQUENCE [LARGE SCALE GENOMIC DNA]</scope>
    <source>
        <strain>H70</strain>
    </source>
</reference>
<accession>C0MET9</accession>
<name>SYL_STRS7</name>
<protein>
    <recommendedName>
        <fullName evidence="1">Leucine--tRNA ligase</fullName>
        <ecNumber evidence="1">6.1.1.4</ecNumber>
    </recommendedName>
    <alternativeName>
        <fullName evidence="1">Leucyl-tRNA synthetase</fullName>
        <shortName evidence="1">LeuRS</shortName>
    </alternativeName>
</protein>
<proteinExistence type="inferred from homology"/>